<keyword id="KW-0975">Bacterial flagellum</keyword>
<keyword id="KW-0998">Cell outer membrane</keyword>
<keyword id="KW-0449">Lipoprotein</keyword>
<keyword id="KW-0472">Membrane</keyword>
<keyword id="KW-0564">Palmitate</keyword>
<keyword id="KW-0732">Signal</keyword>
<accession>Q8PL26</accession>
<sequence>MSRLPSLSRPCLAIACSALLGGCVAAGDVRPFAEMAPIVPVVAPVAQPTAGAIYAAGPGLNLYGDRRARDVGDLLTVNLVESTTASSTANTSISKKDATTMAAPTLLGAPLTVGGLNVLENSTSGDRSFAGKGNTAQSNRMQGSVTVTVMQRLPNGNLVIQGQKNLRLTQGDELVQVQGIVRAADIAPDNTVPSSKVADARIAYGGRGAIAQSNAMGWLSRFFNSRLSPY</sequence>
<dbReference type="EMBL" id="AE008923">
    <property type="protein sequence ID" value="AAM36842.1"/>
    <property type="molecule type" value="Genomic_DNA"/>
</dbReference>
<dbReference type="RefSeq" id="WP_003482963.1">
    <property type="nucleotide sequence ID" value="NC_003919.1"/>
</dbReference>
<dbReference type="SMR" id="Q8PL26"/>
<dbReference type="GeneID" id="66911116"/>
<dbReference type="KEGG" id="xac:XAC1980"/>
<dbReference type="eggNOG" id="COG2063">
    <property type="taxonomic scope" value="Bacteria"/>
</dbReference>
<dbReference type="HOGENOM" id="CLU_069313_0_1_6"/>
<dbReference type="Proteomes" id="UP000000576">
    <property type="component" value="Chromosome"/>
</dbReference>
<dbReference type="GO" id="GO:0009427">
    <property type="term" value="C:bacterial-type flagellum basal body, distal rod, L ring"/>
    <property type="evidence" value="ECO:0007669"/>
    <property type="project" value="InterPro"/>
</dbReference>
<dbReference type="GO" id="GO:0009279">
    <property type="term" value="C:cell outer membrane"/>
    <property type="evidence" value="ECO:0007669"/>
    <property type="project" value="UniProtKB-SubCell"/>
</dbReference>
<dbReference type="GO" id="GO:0003774">
    <property type="term" value="F:cytoskeletal motor activity"/>
    <property type="evidence" value="ECO:0007669"/>
    <property type="project" value="InterPro"/>
</dbReference>
<dbReference type="GO" id="GO:0071973">
    <property type="term" value="P:bacterial-type flagellum-dependent cell motility"/>
    <property type="evidence" value="ECO:0007669"/>
    <property type="project" value="InterPro"/>
</dbReference>
<dbReference type="HAMAP" id="MF_00415">
    <property type="entry name" value="FlgH"/>
    <property type="match status" value="1"/>
</dbReference>
<dbReference type="InterPro" id="IPR000527">
    <property type="entry name" value="Flag_Lring"/>
</dbReference>
<dbReference type="NCBIfam" id="NF001304">
    <property type="entry name" value="PRK00249.1-4"/>
    <property type="match status" value="1"/>
</dbReference>
<dbReference type="PANTHER" id="PTHR34933">
    <property type="entry name" value="FLAGELLAR L-RING PROTEIN"/>
    <property type="match status" value="1"/>
</dbReference>
<dbReference type="PANTHER" id="PTHR34933:SF1">
    <property type="entry name" value="FLAGELLAR L-RING PROTEIN"/>
    <property type="match status" value="1"/>
</dbReference>
<dbReference type="Pfam" id="PF02107">
    <property type="entry name" value="FlgH"/>
    <property type="match status" value="1"/>
</dbReference>
<dbReference type="PRINTS" id="PR01008">
    <property type="entry name" value="FLGLRINGFLGH"/>
</dbReference>
<dbReference type="PROSITE" id="PS51257">
    <property type="entry name" value="PROKAR_LIPOPROTEIN"/>
    <property type="match status" value="1"/>
</dbReference>
<protein>
    <recommendedName>
        <fullName evidence="1">Flagellar L-ring protein</fullName>
    </recommendedName>
    <alternativeName>
        <fullName evidence="1">Basal body L-ring protein</fullName>
    </alternativeName>
</protein>
<comment type="function">
    <text evidence="1">Assembles around the rod to form the L-ring and probably protects the motor/basal body from shearing forces during rotation.</text>
</comment>
<comment type="subunit">
    <text evidence="1">The basal body constitutes a major portion of the flagellar organelle and consists of four rings (L,P,S, and M) mounted on a central rod.</text>
</comment>
<comment type="subcellular location">
    <subcellularLocation>
        <location evidence="1">Cell outer membrane</location>
        <topology evidence="1">Lipid-anchor</topology>
    </subcellularLocation>
    <subcellularLocation>
        <location evidence="1">Bacterial flagellum basal body</location>
    </subcellularLocation>
</comment>
<comment type="similarity">
    <text evidence="1">Belongs to the FlgH family.</text>
</comment>
<gene>
    <name evidence="1" type="primary">flgH</name>
    <name type="ordered locus">XAC1980</name>
</gene>
<evidence type="ECO:0000255" key="1">
    <source>
        <dbReference type="HAMAP-Rule" id="MF_00415"/>
    </source>
</evidence>
<organism>
    <name type="scientific">Xanthomonas axonopodis pv. citri (strain 306)</name>
    <dbReference type="NCBI Taxonomy" id="190486"/>
    <lineage>
        <taxon>Bacteria</taxon>
        <taxon>Pseudomonadati</taxon>
        <taxon>Pseudomonadota</taxon>
        <taxon>Gammaproteobacteria</taxon>
        <taxon>Lysobacterales</taxon>
        <taxon>Lysobacteraceae</taxon>
        <taxon>Xanthomonas</taxon>
    </lineage>
</organism>
<name>FLGH_XANAC</name>
<proteinExistence type="inferred from homology"/>
<feature type="signal peptide" evidence="1">
    <location>
        <begin position="1"/>
        <end position="15"/>
    </location>
</feature>
<feature type="chain" id="PRO_0000009484" description="Flagellar L-ring protein">
    <location>
        <begin position="16"/>
        <end position="230"/>
    </location>
</feature>
<feature type="lipid moiety-binding region" description="N-palmitoyl cysteine" evidence="1">
    <location>
        <position position="16"/>
    </location>
</feature>
<feature type="lipid moiety-binding region" description="S-diacylglycerol cysteine" evidence="1">
    <location>
        <position position="16"/>
    </location>
</feature>
<reference key="1">
    <citation type="journal article" date="2002" name="Nature">
        <title>Comparison of the genomes of two Xanthomonas pathogens with differing host specificities.</title>
        <authorList>
            <person name="da Silva A.C.R."/>
            <person name="Ferro J.A."/>
            <person name="Reinach F.C."/>
            <person name="Farah C.S."/>
            <person name="Furlan L.R."/>
            <person name="Quaggio R.B."/>
            <person name="Monteiro-Vitorello C.B."/>
            <person name="Van Sluys M.A."/>
            <person name="Almeida N.F. Jr."/>
            <person name="Alves L.M.C."/>
            <person name="do Amaral A.M."/>
            <person name="Bertolini M.C."/>
            <person name="Camargo L.E.A."/>
            <person name="Camarotte G."/>
            <person name="Cannavan F."/>
            <person name="Cardozo J."/>
            <person name="Chambergo F."/>
            <person name="Ciapina L.P."/>
            <person name="Cicarelli R.M.B."/>
            <person name="Coutinho L.L."/>
            <person name="Cursino-Santos J.R."/>
            <person name="El-Dorry H."/>
            <person name="Faria J.B."/>
            <person name="Ferreira A.J.S."/>
            <person name="Ferreira R.C.C."/>
            <person name="Ferro M.I.T."/>
            <person name="Formighieri E.F."/>
            <person name="Franco M.C."/>
            <person name="Greggio C.C."/>
            <person name="Gruber A."/>
            <person name="Katsuyama A.M."/>
            <person name="Kishi L.T."/>
            <person name="Leite R.P."/>
            <person name="Lemos E.G.M."/>
            <person name="Lemos M.V.F."/>
            <person name="Locali E.C."/>
            <person name="Machado M.A."/>
            <person name="Madeira A.M.B.N."/>
            <person name="Martinez-Rossi N.M."/>
            <person name="Martins E.C."/>
            <person name="Meidanis J."/>
            <person name="Menck C.F.M."/>
            <person name="Miyaki C.Y."/>
            <person name="Moon D.H."/>
            <person name="Moreira L.M."/>
            <person name="Novo M.T.M."/>
            <person name="Okura V.K."/>
            <person name="Oliveira M.C."/>
            <person name="Oliveira V.R."/>
            <person name="Pereira H.A."/>
            <person name="Rossi A."/>
            <person name="Sena J.A.D."/>
            <person name="Silva C."/>
            <person name="de Souza R.F."/>
            <person name="Spinola L.A.F."/>
            <person name="Takita M.A."/>
            <person name="Tamura R.E."/>
            <person name="Teixeira E.C."/>
            <person name="Tezza R.I.D."/>
            <person name="Trindade dos Santos M."/>
            <person name="Truffi D."/>
            <person name="Tsai S.M."/>
            <person name="White F.F."/>
            <person name="Setubal J.C."/>
            <person name="Kitajima J.P."/>
        </authorList>
    </citation>
    <scope>NUCLEOTIDE SEQUENCE [LARGE SCALE GENOMIC DNA]</scope>
    <source>
        <strain>306</strain>
    </source>
</reference>